<name>SYC_BACHK</name>
<proteinExistence type="inferred from homology"/>
<organism>
    <name type="scientific">Bacillus thuringiensis subsp. konkukian (strain 97-27)</name>
    <dbReference type="NCBI Taxonomy" id="281309"/>
    <lineage>
        <taxon>Bacteria</taxon>
        <taxon>Bacillati</taxon>
        <taxon>Bacillota</taxon>
        <taxon>Bacilli</taxon>
        <taxon>Bacillales</taxon>
        <taxon>Bacillaceae</taxon>
        <taxon>Bacillus</taxon>
        <taxon>Bacillus cereus group</taxon>
    </lineage>
</organism>
<sequence>MTIHIYNTLTRQKEEFTPLEENKVKMYVCGPTVYNYIHIGNARPPMVFDTVRRYLEYKGYDVQYVSNFTDVDDKLIKAANELGEDVPTIADRFVEAYFEDVTALGCKHATVHPRVTENMDIIIEFIQELVNKGYAYESEGDVYFRTKEFEGYGKLSHQPIADLRHGARIEVGEKKQDPLDFALWKAAKEGEIFWESPWGQGRPGWHIECSAMARKYLGDTIDIHAGGQDLAFPHHENEIAQSEALTGKTFARYWMHNGYININNEKMSKSLGNFILVHDIIKQYDPQLIRFFMLSVHYRHPINFSEELLQSTNNGLERIKTAYGNLKHRMESSTDLTDHNEKWLADLEKFQTAFEEAMNDDFNTANAITELYNVANHANQYLLEEHTSTVVIEAYVKQLETLFDILGLELAQEELLDEEIEALIQKRIEARKNRDFALSDQIRDDLKDRNIILEDTAQGTRWKRG</sequence>
<protein>
    <recommendedName>
        <fullName evidence="1">Cysteine--tRNA ligase</fullName>
        <ecNumber evidence="1">6.1.1.16</ecNumber>
    </recommendedName>
    <alternativeName>
        <fullName evidence="1">Cysteinyl-tRNA synthetase</fullName>
        <shortName evidence="1">CysRS</shortName>
    </alternativeName>
</protein>
<comment type="catalytic activity">
    <reaction evidence="1">
        <text>tRNA(Cys) + L-cysteine + ATP = L-cysteinyl-tRNA(Cys) + AMP + diphosphate</text>
        <dbReference type="Rhea" id="RHEA:17773"/>
        <dbReference type="Rhea" id="RHEA-COMP:9661"/>
        <dbReference type="Rhea" id="RHEA-COMP:9679"/>
        <dbReference type="ChEBI" id="CHEBI:30616"/>
        <dbReference type="ChEBI" id="CHEBI:33019"/>
        <dbReference type="ChEBI" id="CHEBI:35235"/>
        <dbReference type="ChEBI" id="CHEBI:78442"/>
        <dbReference type="ChEBI" id="CHEBI:78517"/>
        <dbReference type="ChEBI" id="CHEBI:456215"/>
        <dbReference type="EC" id="6.1.1.16"/>
    </reaction>
</comment>
<comment type="cofactor">
    <cofactor evidence="1">
        <name>Zn(2+)</name>
        <dbReference type="ChEBI" id="CHEBI:29105"/>
    </cofactor>
    <text evidence="1">Binds 1 zinc ion per subunit.</text>
</comment>
<comment type="subunit">
    <text evidence="1">Monomer.</text>
</comment>
<comment type="subcellular location">
    <subcellularLocation>
        <location evidence="1">Cytoplasm</location>
    </subcellularLocation>
</comment>
<comment type="similarity">
    <text evidence="1">Belongs to the class-I aminoacyl-tRNA synthetase family.</text>
</comment>
<gene>
    <name evidence="1" type="primary">cysS</name>
    <name type="ordered locus">BT9727_0086</name>
</gene>
<reference key="1">
    <citation type="journal article" date="2006" name="J. Bacteriol.">
        <title>Pathogenomic sequence analysis of Bacillus cereus and Bacillus thuringiensis isolates closely related to Bacillus anthracis.</title>
        <authorList>
            <person name="Han C.S."/>
            <person name="Xie G."/>
            <person name="Challacombe J.F."/>
            <person name="Altherr M.R."/>
            <person name="Bhotika S.S."/>
            <person name="Bruce D."/>
            <person name="Campbell C.S."/>
            <person name="Campbell M.L."/>
            <person name="Chen J."/>
            <person name="Chertkov O."/>
            <person name="Cleland C."/>
            <person name="Dimitrijevic M."/>
            <person name="Doggett N.A."/>
            <person name="Fawcett J.J."/>
            <person name="Glavina T."/>
            <person name="Goodwin L.A."/>
            <person name="Hill K.K."/>
            <person name="Hitchcock P."/>
            <person name="Jackson P.J."/>
            <person name="Keim P."/>
            <person name="Kewalramani A.R."/>
            <person name="Longmire J."/>
            <person name="Lucas S."/>
            <person name="Malfatti S."/>
            <person name="McMurry K."/>
            <person name="Meincke L.J."/>
            <person name="Misra M."/>
            <person name="Moseman B.L."/>
            <person name="Mundt M."/>
            <person name="Munk A.C."/>
            <person name="Okinaka R.T."/>
            <person name="Parson-Quintana B."/>
            <person name="Reilly L.P."/>
            <person name="Richardson P."/>
            <person name="Robinson D.L."/>
            <person name="Rubin E."/>
            <person name="Saunders E."/>
            <person name="Tapia R."/>
            <person name="Tesmer J.G."/>
            <person name="Thayer N."/>
            <person name="Thompson L.S."/>
            <person name="Tice H."/>
            <person name="Ticknor L.O."/>
            <person name="Wills P.L."/>
            <person name="Brettin T.S."/>
            <person name="Gilna P."/>
        </authorList>
    </citation>
    <scope>NUCLEOTIDE SEQUENCE [LARGE SCALE GENOMIC DNA]</scope>
    <source>
        <strain>97-27</strain>
    </source>
</reference>
<feature type="chain" id="PRO_0000159349" description="Cysteine--tRNA ligase">
    <location>
        <begin position="1"/>
        <end position="465"/>
    </location>
</feature>
<feature type="short sequence motif" description="'HIGH' region">
    <location>
        <begin position="31"/>
        <end position="41"/>
    </location>
</feature>
<feature type="short sequence motif" description="'KMSKS' region">
    <location>
        <begin position="266"/>
        <end position="270"/>
    </location>
</feature>
<feature type="binding site" evidence="1">
    <location>
        <position position="29"/>
    </location>
    <ligand>
        <name>Zn(2+)</name>
        <dbReference type="ChEBI" id="CHEBI:29105"/>
    </ligand>
</feature>
<feature type="binding site" evidence="1">
    <location>
        <position position="209"/>
    </location>
    <ligand>
        <name>Zn(2+)</name>
        <dbReference type="ChEBI" id="CHEBI:29105"/>
    </ligand>
</feature>
<feature type="binding site" evidence="1">
    <location>
        <position position="234"/>
    </location>
    <ligand>
        <name>Zn(2+)</name>
        <dbReference type="ChEBI" id="CHEBI:29105"/>
    </ligand>
</feature>
<feature type="binding site" evidence="1">
    <location>
        <position position="238"/>
    </location>
    <ligand>
        <name>Zn(2+)</name>
        <dbReference type="ChEBI" id="CHEBI:29105"/>
    </ligand>
</feature>
<feature type="binding site" evidence="1">
    <location>
        <position position="269"/>
    </location>
    <ligand>
        <name>ATP</name>
        <dbReference type="ChEBI" id="CHEBI:30616"/>
    </ligand>
</feature>
<feature type="modified residue" description="Phosphoserine" evidence="1">
    <location>
        <position position="270"/>
    </location>
</feature>
<evidence type="ECO:0000255" key="1">
    <source>
        <dbReference type="HAMAP-Rule" id="MF_00041"/>
    </source>
</evidence>
<accession>Q6HPS8</accession>
<keyword id="KW-0030">Aminoacyl-tRNA synthetase</keyword>
<keyword id="KW-0067">ATP-binding</keyword>
<keyword id="KW-0963">Cytoplasm</keyword>
<keyword id="KW-0436">Ligase</keyword>
<keyword id="KW-0479">Metal-binding</keyword>
<keyword id="KW-0547">Nucleotide-binding</keyword>
<keyword id="KW-0597">Phosphoprotein</keyword>
<keyword id="KW-0648">Protein biosynthesis</keyword>
<keyword id="KW-0862">Zinc</keyword>
<dbReference type="EC" id="6.1.1.16" evidence="1"/>
<dbReference type="EMBL" id="AE017355">
    <property type="protein sequence ID" value="AAT63893.1"/>
    <property type="molecule type" value="Genomic_DNA"/>
</dbReference>
<dbReference type="RefSeq" id="WP_000152268.1">
    <property type="nucleotide sequence ID" value="NC_005957.1"/>
</dbReference>
<dbReference type="RefSeq" id="YP_034442.1">
    <property type="nucleotide sequence ID" value="NC_005957.1"/>
</dbReference>
<dbReference type="SMR" id="Q6HPS8"/>
<dbReference type="GeneID" id="45020134"/>
<dbReference type="KEGG" id="btk:BT9727_0086"/>
<dbReference type="PATRIC" id="fig|281309.8.peg.87"/>
<dbReference type="HOGENOM" id="CLU_013528_0_1_9"/>
<dbReference type="Proteomes" id="UP000001301">
    <property type="component" value="Chromosome"/>
</dbReference>
<dbReference type="GO" id="GO:0005829">
    <property type="term" value="C:cytosol"/>
    <property type="evidence" value="ECO:0007669"/>
    <property type="project" value="TreeGrafter"/>
</dbReference>
<dbReference type="GO" id="GO:0005524">
    <property type="term" value="F:ATP binding"/>
    <property type="evidence" value="ECO:0007669"/>
    <property type="project" value="UniProtKB-UniRule"/>
</dbReference>
<dbReference type="GO" id="GO:0004817">
    <property type="term" value="F:cysteine-tRNA ligase activity"/>
    <property type="evidence" value="ECO:0007669"/>
    <property type="project" value="UniProtKB-UniRule"/>
</dbReference>
<dbReference type="GO" id="GO:0008270">
    <property type="term" value="F:zinc ion binding"/>
    <property type="evidence" value="ECO:0007669"/>
    <property type="project" value="UniProtKB-UniRule"/>
</dbReference>
<dbReference type="GO" id="GO:0006423">
    <property type="term" value="P:cysteinyl-tRNA aminoacylation"/>
    <property type="evidence" value="ECO:0007669"/>
    <property type="project" value="UniProtKB-UniRule"/>
</dbReference>
<dbReference type="CDD" id="cd00672">
    <property type="entry name" value="CysRS_core"/>
    <property type="match status" value="1"/>
</dbReference>
<dbReference type="FunFam" id="1.20.120.1910:FF:000002">
    <property type="entry name" value="Cysteine--tRNA ligase"/>
    <property type="match status" value="1"/>
</dbReference>
<dbReference type="FunFam" id="3.40.50.620:FF:000009">
    <property type="entry name" value="Cysteine--tRNA ligase"/>
    <property type="match status" value="1"/>
</dbReference>
<dbReference type="Gene3D" id="1.20.120.1910">
    <property type="entry name" value="Cysteine-tRNA ligase, C-terminal anti-codon recognition domain"/>
    <property type="match status" value="1"/>
</dbReference>
<dbReference type="Gene3D" id="3.40.50.620">
    <property type="entry name" value="HUPs"/>
    <property type="match status" value="1"/>
</dbReference>
<dbReference type="HAMAP" id="MF_00041">
    <property type="entry name" value="Cys_tRNA_synth"/>
    <property type="match status" value="1"/>
</dbReference>
<dbReference type="InterPro" id="IPR015803">
    <property type="entry name" value="Cys-tRNA-ligase"/>
</dbReference>
<dbReference type="InterPro" id="IPR015273">
    <property type="entry name" value="Cys-tRNA-synt_Ia_DALR"/>
</dbReference>
<dbReference type="InterPro" id="IPR024909">
    <property type="entry name" value="Cys-tRNA/MSH_ligase"/>
</dbReference>
<dbReference type="InterPro" id="IPR014729">
    <property type="entry name" value="Rossmann-like_a/b/a_fold"/>
</dbReference>
<dbReference type="InterPro" id="IPR032678">
    <property type="entry name" value="tRNA-synt_1_cat_dom"/>
</dbReference>
<dbReference type="InterPro" id="IPR009080">
    <property type="entry name" value="tRNAsynth_Ia_anticodon-bd"/>
</dbReference>
<dbReference type="NCBIfam" id="TIGR00435">
    <property type="entry name" value="cysS"/>
    <property type="match status" value="1"/>
</dbReference>
<dbReference type="PANTHER" id="PTHR10890:SF3">
    <property type="entry name" value="CYSTEINE--TRNA LIGASE, CYTOPLASMIC"/>
    <property type="match status" value="1"/>
</dbReference>
<dbReference type="PANTHER" id="PTHR10890">
    <property type="entry name" value="CYSTEINYL-TRNA SYNTHETASE"/>
    <property type="match status" value="1"/>
</dbReference>
<dbReference type="Pfam" id="PF09190">
    <property type="entry name" value="DALR_2"/>
    <property type="match status" value="1"/>
</dbReference>
<dbReference type="Pfam" id="PF01406">
    <property type="entry name" value="tRNA-synt_1e"/>
    <property type="match status" value="1"/>
</dbReference>
<dbReference type="PRINTS" id="PR00983">
    <property type="entry name" value="TRNASYNTHCYS"/>
</dbReference>
<dbReference type="SMART" id="SM00840">
    <property type="entry name" value="DALR_2"/>
    <property type="match status" value="1"/>
</dbReference>
<dbReference type="SUPFAM" id="SSF47323">
    <property type="entry name" value="Anticodon-binding domain of a subclass of class I aminoacyl-tRNA synthetases"/>
    <property type="match status" value="1"/>
</dbReference>
<dbReference type="SUPFAM" id="SSF52374">
    <property type="entry name" value="Nucleotidylyl transferase"/>
    <property type="match status" value="1"/>
</dbReference>